<proteinExistence type="inferred from homology"/>
<dbReference type="EMBL" id="CP000901">
    <property type="protein sequence ID" value="ABX88080.1"/>
    <property type="status" value="ALT_INIT"/>
    <property type="molecule type" value="Genomic_DNA"/>
</dbReference>
<dbReference type="RefSeq" id="WP_041854864.1">
    <property type="nucleotide sequence ID" value="NC_010159.1"/>
</dbReference>
<dbReference type="SMR" id="A9R1Q6"/>
<dbReference type="KEGG" id="ypg:YpAngola_A1120"/>
<dbReference type="PATRIC" id="fig|349746.12.peg.2071"/>
<dbReference type="GO" id="GO:0031241">
    <property type="term" value="C:periplasmic side of cell outer membrane"/>
    <property type="evidence" value="ECO:0007669"/>
    <property type="project" value="UniProtKB-UniRule"/>
</dbReference>
<dbReference type="GO" id="GO:0030234">
    <property type="term" value="F:enzyme regulator activity"/>
    <property type="evidence" value="ECO:0007669"/>
    <property type="project" value="UniProtKB-UniRule"/>
</dbReference>
<dbReference type="GO" id="GO:0009252">
    <property type="term" value="P:peptidoglycan biosynthetic process"/>
    <property type="evidence" value="ECO:0007669"/>
    <property type="project" value="UniProtKB-UniRule"/>
</dbReference>
<dbReference type="GO" id="GO:0008360">
    <property type="term" value="P:regulation of cell shape"/>
    <property type="evidence" value="ECO:0007669"/>
    <property type="project" value="UniProtKB-KW"/>
</dbReference>
<dbReference type="CDD" id="cd06339">
    <property type="entry name" value="PBP1_YraM_LppC_lipoprotein-like"/>
    <property type="match status" value="1"/>
</dbReference>
<dbReference type="Gene3D" id="1.25.40.650">
    <property type="match status" value="1"/>
</dbReference>
<dbReference type="Gene3D" id="3.40.50.2300">
    <property type="match status" value="2"/>
</dbReference>
<dbReference type="Gene3D" id="1.25.40.10">
    <property type="entry name" value="Tetratricopeptide repeat domain"/>
    <property type="match status" value="1"/>
</dbReference>
<dbReference type="HAMAP" id="MF_01890">
    <property type="entry name" value="LpoA"/>
    <property type="match status" value="1"/>
</dbReference>
<dbReference type="InterPro" id="IPR007443">
    <property type="entry name" value="LpoA"/>
</dbReference>
<dbReference type="InterPro" id="IPR028082">
    <property type="entry name" value="Peripla_BP_I"/>
</dbReference>
<dbReference type="InterPro" id="IPR011990">
    <property type="entry name" value="TPR-like_helical_dom_sf"/>
</dbReference>
<dbReference type="PANTHER" id="PTHR38038">
    <property type="entry name" value="PENICILLIN-BINDING PROTEIN ACTIVATOR LPOA"/>
    <property type="match status" value="1"/>
</dbReference>
<dbReference type="PANTHER" id="PTHR38038:SF1">
    <property type="entry name" value="PENICILLIN-BINDING PROTEIN ACTIVATOR LPOA"/>
    <property type="match status" value="1"/>
</dbReference>
<dbReference type="Pfam" id="PF04348">
    <property type="entry name" value="LppC"/>
    <property type="match status" value="2"/>
</dbReference>
<dbReference type="SUPFAM" id="SSF53822">
    <property type="entry name" value="Periplasmic binding protein-like I"/>
    <property type="match status" value="1"/>
</dbReference>
<name>LPOA_YERPG</name>
<protein>
    <recommendedName>
        <fullName evidence="1">Penicillin-binding protein activator LpoA</fullName>
        <shortName evidence="1">PBP activator LpoA</shortName>
    </recommendedName>
</protein>
<keyword id="KW-0998">Cell outer membrane</keyword>
<keyword id="KW-0133">Cell shape</keyword>
<keyword id="KW-0449">Lipoprotein</keyword>
<keyword id="KW-0472">Membrane</keyword>
<keyword id="KW-0564">Palmitate</keyword>
<keyword id="KW-0573">Peptidoglycan synthesis</keyword>
<keyword id="KW-0732">Signal</keyword>
<organism>
    <name type="scientific">Yersinia pestis bv. Antiqua (strain Angola)</name>
    <dbReference type="NCBI Taxonomy" id="349746"/>
    <lineage>
        <taxon>Bacteria</taxon>
        <taxon>Pseudomonadati</taxon>
        <taxon>Pseudomonadota</taxon>
        <taxon>Gammaproteobacteria</taxon>
        <taxon>Enterobacterales</taxon>
        <taxon>Yersiniaceae</taxon>
        <taxon>Yersinia</taxon>
    </lineage>
</organism>
<evidence type="ECO:0000255" key="1">
    <source>
        <dbReference type="HAMAP-Rule" id="MF_01890"/>
    </source>
</evidence>
<evidence type="ECO:0000305" key="2"/>
<sequence>MLSSTFVRSKAGLVPVILAALILAACTGDAPQTPPPVNIQDEASANSDYYLQQLQQSSDDNKADWQLLAIRALLREAKVPQAAEQLSTLPANLSDTQRQEQQLLAAELLIAQKNTPAAADILAKLEATQLSANQKVRYYQAQIAANQDKATLPLIRAFIAQEPLLTDKAHQDNIDGTWQSLSQLTPQELNTMVINADENVLQGWLDLLRVYQDNKQDPKLLKAGIKDWQTRYPQNPAAKNLPTALTQISNFSQASTAKIALLLPLSGPAQVFADAIQQGFTAAQNGSAVTASVPVTPNVTESSPTDTAAVVSDDTPATLPAPVPPPVVTNAQVKIYDTNTQPLAALLAQAQQDGATLVVGPLLKPEVEQLSATPSTLNILALNQPEASNNSPNICYFALSPEDEARDAAHHLWEQQKRMPLLLVPRGALGERIAKAFADEWQKQGGQTVLQQNFGSTTELKQSINSGAGIRLTGTPVSVSNVAAAPASVTIAGLTIPAPPIDAPVVSTSSSGNIDAVYIIATPSELTLIKPMIDMATSSRSKPALFASSRSYQAGAGPDYRLEMEGIQFSDIPLMAGSNPALLQQASAKYANDYSLVRLYAMGIDAWALANHFSEMRQIPGFQVKGVTGDLTASSDCVITRKLPWLQYRQGMVVPLA</sequence>
<accession>A9R1Q6</accession>
<reference key="1">
    <citation type="journal article" date="2010" name="J. Bacteriol.">
        <title>Genome sequence of the deep-rooted Yersinia pestis strain Angola reveals new insights into the evolution and pangenome of the plague bacterium.</title>
        <authorList>
            <person name="Eppinger M."/>
            <person name="Worsham P.L."/>
            <person name="Nikolich M.P."/>
            <person name="Riley D.R."/>
            <person name="Sebastian Y."/>
            <person name="Mou S."/>
            <person name="Achtman M."/>
            <person name="Lindler L.E."/>
            <person name="Ravel J."/>
        </authorList>
    </citation>
    <scope>NUCLEOTIDE SEQUENCE [LARGE SCALE GENOMIC DNA]</scope>
    <source>
        <strain>Angola</strain>
    </source>
</reference>
<comment type="function">
    <text evidence="1">Regulator of peptidoglycan synthesis that is essential for the function of penicillin-binding protein 1A (PBP1a).</text>
</comment>
<comment type="subunit">
    <text evidence="1">Interacts with PBP1a.</text>
</comment>
<comment type="subcellular location">
    <subcellularLocation>
        <location evidence="1">Cell outer membrane</location>
        <topology evidence="1">Lipid-anchor</topology>
        <orientation evidence="1">Periplasmic side</orientation>
    </subcellularLocation>
</comment>
<comment type="similarity">
    <text evidence="1">Belongs to the LpoA family.</text>
</comment>
<comment type="sequence caution" evidence="2">
    <conflict type="erroneous initiation">
        <sequence resource="EMBL-CDS" id="ABX88080"/>
    </conflict>
    <text>Extended N-terminus.</text>
</comment>
<feature type="signal peptide" evidence="1">
    <location>
        <begin position="1"/>
        <end position="25"/>
    </location>
</feature>
<feature type="chain" id="PRO_0000405953" description="Penicillin-binding protein activator LpoA">
    <location>
        <begin position="26"/>
        <end position="657"/>
    </location>
</feature>
<feature type="lipid moiety-binding region" description="N-palmitoyl cysteine" evidence="1">
    <location>
        <position position="26"/>
    </location>
</feature>
<feature type="lipid moiety-binding region" description="S-diacylglycerol cysteine" evidence="1">
    <location>
        <position position="26"/>
    </location>
</feature>
<gene>
    <name evidence="1" type="primary">lpoA</name>
    <name type="ordered locus">YpAngola_A1120</name>
</gene>